<keyword id="KW-0012">Acyltransferase</keyword>
<keyword id="KW-0963">Cytoplasm</keyword>
<keyword id="KW-0408">Iron</keyword>
<keyword id="KW-0479">Metal-binding</keyword>
<keyword id="KW-0808">Transferase</keyword>
<keyword id="KW-0819">tRNA processing</keyword>
<comment type="function">
    <text evidence="1">Required for the formation of a threonylcarbamoyl group on adenosine at position 37 (t(6)A37) in tRNAs that read codons beginning with adenine. Is involved in the transfer of the threonylcarbamoyl moiety of threonylcarbamoyl-AMP (TC-AMP) to the N6 group of A37, together with TsaE and TsaB. TsaD likely plays a direct catalytic role in this reaction.</text>
</comment>
<comment type="catalytic activity">
    <reaction evidence="1">
        <text>L-threonylcarbamoyladenylate + adenosine(37) in tRNA = N(6)-L-threonylcarbamoyladenosine(37) in tRNA + AMP + H(+)</text>
        <dbReference type="Rhea" id="RHEA:37059"/>
        <dbReference type="Rhea" id="RHEA-COMP:10162"/>
        <dbReference type="Rhea" id="RHEA-COMP:10163"/>
        <dbReference type="ChEBI" id="CHEBI:15378"/>
        <dbReference type="ChEBI" id="CHEBI:73682"/>
        <dbReference type="ChEBI" id="CHEBI:74411"/>
        <dbReference type="ChEBI" id="CHEBI:74418"/>
        <dbReference type="ChEBI" id="CHEBI:456215"/>
        <dbReference type="EC" id="2.3.1.234"/>
    </reaction>
</comment>
<comment type="cofactor">
    <cofactor evidence="1">
        <name>Fe(2+)</name>
        <dbReference type="ChEBI" id="CHEBI:29033"/>
    </cofactor>
    <text evidence="1">Binds 1 Fe(2+) ion per subunit.</text>
</comment>
<comment type="subcellular location">
    <subcellularLocation>
        <location evidence="1">Cytoplasm</location>
    </subcellularLocation>
</comment>
<comment type="similarity">
    <text evidence="1">Belongs to the KAE1 / TsaD family.</text>
</comment>
<comment type="sequence caution" evidence="2">
    <conflict type="erroneous initiation">
        <sequence resource="EMBL-CDS" id="ABO65598"/>
    </conflict>
</comment>
<evidence type="ECO:0000255" key="1">
    <source>
        <dbReference type="HAMAP-Rule" id="MF_01445"/>
    </source>
</evidence>
<evidence type="ECO:0000305" key="2"/>
<protein>
    <recommendedName>
        <fullName evidence="1">tRNA N6-adenosine threonylcarbamoyltransferase</fullName>
        <ecNumber evidence="1">2.3.1.234</ecNumber>
    </recommendedName>
    <alternativeName>
        <fullName evidence="1">N6-L-threonylcarbamoyladenine synthase</fullName>
        <shortName evidence="1">t(6)A synthase</shortName>
    </alternativeName>
    <alternativeName>
        <fullName evidence="1">t(6)A37 threonylcarbamoyladenosine biosynthesis protein TsaD</fullName>
    </alternativeName>
    <alternativeName>
        <fullName evidence="1">tRNA threonylcarbamoyladenosine biosynthesis protein TsaD</fullName>
    </alternativeName>
</protein>
<accession>A4IJU4</accession>
<organism>
    <name type="scientific">Geobacillus thermodenitrificans (strain NG80-2)</name>
    <dbReference type="NCBI Taxonomy" id="420246"/>
    <lineage>
        <taxon>Bacteria</taxon>
        <taxon>Bacillati</taxon>
        <taxon>Bacillota</taxon>
        <taxon>Bacilli</taxon>
        <taxon>Bacillales</taxon>
        <taxon>Anoxybacillaceae</taxon>
        <taxon>Geobacillus</taxon>
    </lineage>
</organism>
<name>TSAD_GEOTN</name>
<dbReference type="EC" id="2.3.1.234" evidence="1"/>
<dbReference type="EMBL" id="CP000557">
    <property type="protein sequence ID" value="ABO65598.1"/>
    <property type="status" value="ALT_INIT"/>
    <property type="molecule type" value="Genomic_DNA"/>
</dbReference>
<dbReference type="RefSeq" id="WP_008882025.1">
    <property type="nucleotide sequence ID" value="NC_009328.1"/>
</dbReference>
<dbReference type="SMR" id="A4IJU4"/>
<dbReference type="GeneID" id="87622184"/>
<dbReference type="KEGG" id="gtn:GTNG_0214"/>
<dbReference type="eggNOG" id="COG0533">
    <property type="taxonomic scope" value="Bacteria"/>
</dbReference>
<dbReference type="HOGENOM" id="CLU_023208_0_2_9"/>
<dbReference type="Proteomes" id="UP000001578">
    <property type="component" value="Chromosome"/>
</dbReference>
<dbReference type="GO" id="GO:0005737">
    <property type="term" value="C:cytoplasm"/>
    <property type="evidence" value="ECO:0007669"/>
    <property type="project" value="UniProtKB-SubCell"/>
</dbReference>
<dbReference type="GO" id="GO:0005506">
    <property type="term" value="F:iron ion binding"/>
    <property type="evidence" value="ECO:0007669"/>
    <property type="project" value="UniProtKB-UniRule"/>
</dbReference>
<dbReference type="GO" id="GO:0061711">
    <property type="term" value="F:N(6)-L-threonylcarbamoyladenine synthase activity"/>
    <property type="evidence" value="ECO:0007669"/>
    <property type="project" value="UniProtKB-EC"/>
</dbReference>
<dbReference type="GO" id="GO:0002949">
    <property type="term" value="P:tRNA threonylcarbamoyladenosine modification"/>
    <property type="evidence" value="ECO:0007669"/>
    <property type="project" value="UniProtKB-UniRule"/>
</dbReference>
<dbReference type="CDD" id="cd24133">
    <property type="entry name" value="ASKHA_NBD_TsaD_bac"/>
    <property type="match status" value="1"/>
</dbReference>
<dbReference type="FunFam" id="3.30.420.40:FF:000012">
    <property type="entry name" value="tRNA N6-adenosine threonylcarbamoyltransferase"/>
    <property type="match status" value="1"/>
</dbReference>
<dbReference type="FunFam" id="3.30.420.40:FF:000040">
    <property type="entry name" value="tRNA N6-adenosine threonylcarbamoyltransferase"/>
    <property type="match status" value="1"/>
</dbReference>
<dbReference type="Gene3D" id="3.30.420.40">
    <property type="match status" value="2"/>
</dbReference>
<dbReference type="HAMAP" id="MF_01445">
    <property type="entry name" value="TsaD"/>
    <property type="match status" value="1"/>
</dbReference>
<dbReference type="InterPro" id="IPR043129">
    <property type="entry name" value="ATPase_NBD"/>
</dbReference>
<dbReference type="InterPro" id="IPR000905">
    <property type="entry name" value="Gcp-like_dom"/>
</dbReference>
<dbReference type="InterPro" id="IPR017861">
    <property type="entry name" value="KAE1/TsaD"/>
</dbReference>
<dbReference type="InterPro" id="IPR017860">
    <property type="entry name" value="Peptidase_M22_CS"/>
</dbReference>
<dbReference type="InterPro" id="IPR022450">
    <property type="entry name" value="TsaD"/>
</dbReference>
<dbReference type="NCBIfam" id="TIGR00329">
    <property type="entry name" value="gcp_kae1"/>
    <property type="match status" value="1"/>
</dbReference>
<dbReference type="NCBIfam" id="TIGR03723">
    <property type="entry name" value="T6A_TsaD_YgjD"/>
    <property type="match status" value="1"/>
</dbReference>
<dbReference type="PANTHER" id="PTHR11735">
    <property type="entry name" value="TRNA N6-ADENOSINE THREONYLCARBAMOYLTRANSFERASE"/>
    <property type="match status" value="1"/>
</dbReference>
<dbReference type="PANTHER" id="PTHR11735:SF6">
    <property type="entry name" value="TRNA N6-ADENOSINE THREONYLCARBAMOYLTRANSFERASE, MITOCHONDRIAL"/>
    <property type="match status" value="1"/>
</dbReference>
<dbReference type="Pfam" id="PF00814">
    <property type="entry name" value="TsaD"/>
    <property type="match status" value="1"/>
</dbReference>
<dbReference type="PRINTS" id="PR00789">
    <property type="entry name" value="OSIALOPTASE"/>
</dbReference>
<dbReference type="SUPFAM" id="SSF53067">
    <property type="entry name" value="Actin-like ATPase domain"/>
    <property type="match status" value="2"/>
</dbReference>
<dbReference type="PROSITE" id="PS01016">
    <property type="entry name" value="GLYCOPROTEASE"/>
    <property type="match status" value="1"/>
</dbReference>
<reference key="1">
    <citation type="journal article" date="2007" name="Proc. Natl. Acad. Sci. U.S.A.">
        <title>Genome and proteome of long-chain alkane degrading Geobacillus thermodenitrificans NG80-2 isolated from a deep-subsurface oil reservoir.</title>
        <authorList>
            <person name="Feng L."/>
            <person name="Wang W."/>
            <person name="Cheng J."/>
            <person name="Ren Y."/>
            <person name="Zhao G."/>
            <person name="Gao C."/>
            <person name="Tang Y."/>
            <person name="Liu X."/>
            <person name="Han W."/>
            <person name="Peng X."/>
            <person name="Liu R."/>
            <person name="Wang L."/>
        </authorList>
    </citation>
    <scope>NUCLEOTIDE SEQUENCE [LARGE SCALE GENOMIC DNA]</scope>
    <source>
        <strain>NG80-2</strain>
    </source>
</reference>
<feature type="chain" id="PRO_0000303373" description="tRNA N6-adenosine threonylcarbamoyltransferase">
    <location>
        <begin position="1"/>
        <end position="342"/>
    </location>
</feature>
<feature type="binding site" evidence="1">
    <location>
        <position position="120"/>
    </location>
    <ligand>
        <name>Fe cation</name>
        <dbReference type="ChEBI" id="CHEBI:24875"/>
    </ligand>
</feature>
<feature type="binding site" evidence="1">
    <location>
        <position position="124"/>
    </location>
    <ligand>
        <name>Fe cation</name>
        <dbReference type="ChEBI" id="CHEBI:24875"/>
    </ligand>
</feature>
<feature type="binding site" evidence="1">
    <location>
        <begin position="142"/>
        <end position="146"/>
    </location>
    <ligand>
        <name>substrate</name>
    </ligand>
</feature>
<feature type="binding site" evidence="1">
    <location>
        <position position="175"/>
    </location>
    <ligand>
        <name>substrate</name>
    </ligand>
</feature>
<feature type="binding site" evidence="1">
    <location>
        <position position="188"/>
    </location>
    <ligand>
        <name>substrate</name>
    </ligand>
</feature>
<feature type="binding site" evidence="1">
    <location>
        <position position="192"/>
    </location>
    <ligand>
        <name>substrate</name>
    </ligand>
</feature>
<feature type="binding site" evidence="1">
    <location>
        <position position="281"/>
    </location>
    <ligand>
        <name>substrate</name>
    </ligand>
</feature>
<feature type="binding site" evidence="1">
    <location>
        <position position="310"/>
    </location>
    <ligand>
        <name>Fe cation</name>
        <dbReference type="ChEBI" id="CHEBI:24875"/>
    </ligand>
</feature>
<proteinExistence type="inferred from homology"/>
<gene>
    <name evidence="1" type="primary">tsaD</name>
    <name type="synonym">gcp</name>
    <name type="ordered locus">GTNG_0214</name>
</gene>
<sequence length="342" mass="36399">MGEIDMNEDVYVLGIETSCDETAAAVVKNGKEIVSNVVASQMESHRRFGGVVPEIASRHHVEQITLVIEEAMQRAGVSFSNLDAVAVTAGPGLVGALLVGVNAAKALAFAHGLPLVGVHHIAGHIYANQLVAEMKFPLLALVVSGGHTELIYMEEHGKFTVIGETRDDAAGEAYDKVARALGLPYPGGPHIDRLAHEGEPVIDLPRAWLEEGSYDFSFSGLKSAVLNTLHNAKQRGEEIDPKHMAASFQESVVDVLVTKTVQAAKQYRVRQVLLAGGVAANRGLRSALQDKMKELPGVELVIPPLSLCTDNAAMIAAAGTVLYWQGKRSDLALNANPGLPLV</sequence>